<keyword id="KW-0963">Cytoplasm</keyword>
<keyword id="KW-0274">FAD</keyword>
<keyword id="KW-0285">Flavoprotein</keyword>
<keyword id="KW-0520">NAD</keyword>
<keyword id="KW-0819">tRNA processing</keyword>
<reference key="1">
    <citation type="journal article" date="2006" name="Lancet">
        <title>Complete genome sequence of USA300, an epidemic clone of community-acquired meticillin-resistant Staphylococcus aureus.</title>
        <authorList>
            <person name="Diep B.A."/>
            <person name="Gill S.R."/>
            <person name="Chang R.F."/>
            <person name="Phan T.H."/>
            <person name="Chen J.H."/>
            <person name="Davidson M.G."/>
            <person name="Lin F."/>
            <person name="Lin J."/>
            <person name="Carleton H.A."/>
            <person name="Mongodin E.F."/>
            <person name="Sensabaugh G.F."/>
            <person name="Perdreau-Remington F."/>
        </authorList>
    </citation>
    <scope>NUCLEOTIDE SEQUENCE [LARGE SCALE GENOMIC DNA]</scope>
    <source>
        <strain>USA300</strain>
    </source>
</reference>
<feature type="chain" id="PRO_0000345339" description="tRNA uridine 5-carboxymethylaminomethyl modification enzyme MnmG">
    <location>
        <begin position="1"/>
        <end position="625"/>
    </location>
</feature>
<feature type="binding site" evidence="1">
    <location>
        <begin position="11"/>
        <end position="16"/>
    </location>
    <ligand>
        <name>FAD</name>
        <dbReference type="ChEBI" id="CHEBI:57692"/>
    </ligand>
</feature>
<feature type="binding site" evidence="1">
    <location>
        <position position="123"/>
    </location>
    <ligand>
        <name>FAD</name>
        <dbReference type="ChEBI" id="CHEBI:57692"/>
    </ligand>
</feature>
<feature type="binding site" evidence="1">
    <location>
        <position position="178"/>
    </location>
    <ligand>
        <name>FAD</name>
        <dbReference type="ChEBI" id="CHEBI:57692"/>
    </ligand>
</feature>
<feature type="binding site" evidence="1">
    <location>
        <begin position="270"/>
        <end position="284"/>
    </location>
    <ligand>
        <name>NAD(+)</name>
        <dbReference type="ChEBI" id="CHEBI:57540"/>
    </ligand>
</feature>
<feature type="binding site" evidence="1">
    <location>
        <position position="367"/>
    </location>
    <ligand>
        <name>FAD</name>
        <dbReference type="ChEBI" id="CHEBI:57692"/>
    </ligand>
</feature>
<sequence>MVQEYDVIVIGAGHAGVEAGLASARRGAKTLMLTINLDNIAFMPCNPSVGGPAKGIVVREIDALGGQMAKTIDKTHIQMRMLNTGKGPAVRALRAQADKVLYQQEMKRVIEDEENLHIMQGMVDELIIEDNEVKGVRTNIGTEYLSKAVIITTGTFLRGEIILGNMKYSSGPNHQLPSITLSDNLRELGFDIVRFKTGTPPRVNSKTIDYSKTEIQPGDDVGRAFSFETTEYILDQLPCWLTYTNAETHKVIDDNLHLSAMYSGMIKGTGPRYCPSIEDKFVRFNDKPRHQLFLEPEGRNTNEVYVQGLSTSLPEHVQRQMLETIPGLEKADMMRAGYAIEYDAIVPTQLWPTLETKMIKNLYTAGQINGTSGYEEAAGQGLMAGINAAGKVLNTGEKILSRSDAYIGVLIDDLVTKGTNEPYRLLTSRAEYRLLLRHDNADLRLTDMGYELGMISEERYARFNEKRQQIDAEIKRLSDIRIKPNEHTQAIIEQHGGSRLKDGILAIDLLRRPEMTYDIILELLEEEHQLNADVEEQVEIQTKYEGYINKSLQQVEKVKRMEEKKIPEDLDYSKIDSLATEAREKLSEVKPLNIAQASRISGVNPADISILLIYLEQGKLQRVSD</sequence>
<accession>Q2FDE9</accession>
<organism>
    <name type="scientific">Staphylococcus aureus (strain USA300)</name>
    <dbReference type="NCBI Taxonomy" id="367830"/>
    <lineage>
        <taxon>Bacteria</taxon>
        <taxon>Bacillati</taxon>
        <taxon>Bacillota</taxon>
        <taxon>Bacilli</taxon>
        <taxon>Bacillales</taxon>
        <taxon>Staphylococcaceae</taxon>
        <taxon>Staphylococcus</taxon>
    </lineage>
</organism>
<dbReference type="EMBL" id="CP000255">
    <property type="protein sequence ID" value="ABD20531.1"/>
    <property type="status" value="ALT_INIT"/>
    <property type="molecule type" value="Genomic_DNA"/>
</dbReference>
<dbReference type="RefSeq" id="WP_000249662.1">
    <property type="nucleotide sequence ID" value="NZ_CP027476.1"/>
</dbReference>
<dbReference type="SMR" id="Q2FDE9"/>
<dbReference type="KEGG" id="saa:SAUSA300_2645"/>
<dbReference type="HOGENOM" id="CLU_007831_2_2_9"/>
<dbReference type="OMA" id="CNPAMGG"/>
<dbReference type="Proteomes" id="UP000001939">
    <property type="component" value="Chromosome"/>
</dbReference>
<dbReference type="GO" id="GO:0005829">
    <property type="term" value="C:cytosol"/>
    <property type="evidence" value="ECO:0007669"/>
    <property type="project" value="TreeGrafter"/>
</dbReference>
<dbReference type="GO" id="GO:0050660">
    <property type="term" value="F:flavin adenine dinucleotide binding"/>
    <property type="evidence" value="ECO:0007669"/>
    <property type="project" value="UniProtKB-UniRule"/>
</dbReference>
<dbReference type="GO" id="GO:0030488">
    <property type="term" value="P:tRNA methylation"/>
    <property type="evidence" value="ECO:0007669"/>
    <property type="project" value="TreeGrafter"/>
</dbReference>
<dbReference type="GO" id="GO:0002098">
    <property type="term" value="P:tRNA wobble uridine modification"/>
    <property type="evidence" value="ECO:0007669"/>
    <property type="project" value="InterPro"/>
</dbReference>
<dbReference type="FunFam" id="1.10.10.1800:FF:000001">
    <property type="entry name" value="tRNA uridine 5-carboxymethylaminomethyl modification enzyme MnmG"/>
    <property type="match status" value="1"/>
</dbReference>
<dbReference type="FunFam" id="1.10.150.570:FF:000001">
    <property type="entry name" value="tRNA uridine 5-carboxymethylaminomethyl modification enzyme MnmG"/>
    <property type="match status" value="1"/>
</dbReference>
<dbReference type="FunFam" id="3.50.50.60:FF:000002">
    <property type="entry name" value="tRNA uridine 5-carboxymethylaminomethyl modification enzyme MnmG"/>
    <property type="match status" value="1"/>
</dbReference>
<dbReference type="FunFam" id="3.50.50.60:FF:000063">
    <property type="entry name" value="tRNA uridine 5-carboxymethylaminomethyl modification enzyme MnmG"/>
    <property type="match status" value="1"/>
</dbReference>
<dbReference type="Gene3D" id="3.50.50.60">
    <property type="entry name" value="FAD/NAD(P)-binding domain"/>
    <property type="match status" value="2"/>
</dbReference>
<dbReference type="Gene3D" id="1.10.150.570">
    <property type="entry name" value="GidA associated domain, C-terminal subdomain"/>
    <property type="match status" value="1"/>
</dbReference>
<dbReference type="Gene3D" id="1.10.10.1800">
    <property type="entry name" value="tRNA uridine 5-carboxymethylaminomethyl modification enzyme MnmG/GidA"/>
    <property type="match status" value="1"/>
</dbReference>
<dbReference type="HAMAP" id="MF_00129">
    <property type="entry name" value="MnmG_GidA"/>
    <property type="match status" value="1"/>
</dbReference>
<dbReference type="InterPro" id="IPR036188">
    <property type="entry name" value="FAD/NAD-bd_sf"/>
</dbReference>
<dbReference type="InterPro" id="IPR049312">
    <property type="entry name" value="GIDA_C_N"/>
</dbReference>
<dbReference type="InterPro" id="IPR004416">
    <property type="entry name" value="MnmG"/>
</dbReference>
<dbReference type="InterPro" id="IPR002218">
    <property type="entry name" value="MnmG-rel"/>
</dbReference>
<dbReference type="InterPro" id="IPR020595">
    <property type="entry name" value="MnmG-rel_CS"/>
</dbReference>
<dbReference type="InterPro" id="IPR026904">
    <property type="entry name" value="MnmG_C"/>
</dbReference>
<dbReference type="InterPro" id="IPR047001">
    <property type="entry name" value="MnmG_C_subdom"/>
</dbReference>
<dbReference type="InterPro" id="IPR044920">
    <property type="entry name" value="MnmG_C_subdom_sf"/>
</dbReference>
<dbReference type="InterPro" id="IPR040131">
    <property type="entry name" value="MnmG_N"/>
</dbReference>
<dbReference type="NCBIfam" id="TIGR00136">
    <property type="entry name" value="mnmG_gidA"/>
    <property type="match status" value="1"/>
</dbReference>
<dbReference type="PANTHER" id="PTHR11806">
    <property type="entry name" value="GLUCOSE INHIBITED DIVISION PROTEIN A"/>
    <property type="match status" value="1"/>
</dbReference>
<dbReference type="PANTHER" id="PTHR11806:SF0">
    <property type="entry name" value="PROTEIN MTO1 HOMOLOG, MITOCHONDRIAL"/>
    <property type="match status" value="1"/>
</dbReference>
<dbReference type="Pfam" id="PF01134">
    <property type="entry name" value="GIDA"/>
    <property type="match status" value="1"/>
</dbReference>
<dbReference type="Pfam" id="PF21680">
    <property type="entry name" value="GIDA_C_1st"/>
    <property type="match status" value="1"/>
</dbReference>
<dbReference type="Pfam" id="PF13932">
    <property type="entry name" value="SAM_GIDA_C"/>
    <property type="match status" value="1"/>
</dbReference>
<dbReference type="PRINTS" id="PR00411">
    <property type="entry name" value="PNDRDTASEI"/>
</dbReference>
<dbReference type="SMART" id="SM01228">
    <property type="entry name" value="GIDA_assoc_3"/>
    <property type="match status" value="1"/>
</dbReference>
<dbReference type="SUPFAM" id="SSF51905">
    <property type="entry name" value="FAD/NAD(P)-binding domain"/>
    <property type="match status" value="1"/>
</dbReference>
<dbReference type="PROSITE" id="PS01280">
    <property type="entry name" value="GIDA_1"/>
    <property type="match status" value="1"/>
</dbReference>
<dbReference type="PROSITE" id="PS01281">
    <property type="entry name" value="GIDA_2"/>
    <property type="match status" value="1"/>
</dbReference>
<protein>
    <recommendedName>
        <fullName evidence="1">tRNA uridine 5-carboxymethylaminomethyl modification enzyme MnmG</fullName>
    </recommendedName>
    <alternativeName>
        <fullName evidence="1">Glucose-inhibited division protein A</fullName>
    </alternativeName>
</protein>
<comment type="function">
    <text evidence="1">NAD-binding protein involved in the addition of a carboxymethylaminomethyl (cmnm) group at the wobble position (U34) of certain tRNAs, forming tRNA-cmnm(5)s(2)U34.</text>
</comment>
<comment type="cofactor">
    <cofactor evidence="1">
        <name>FAD</name>
        <dbReference type="ChEBI" id="CHEBI:57692"/>
    </cofactor>
</comment>
<comment type="subunit">
    <text evidence="1">Homodimer. Heterotetramer of two MnmE and two MnmG subunits.</text>
</comment>
<comment type="subcellular location">
    <subcellularLocation>
        <location evidence="1">Cytoplasm</location>
    </subcellularLocation>
</comment>
<comment type="similarity">
    <text evidence="1">Belongs to the MnmG family.</text>
</comment>
<comment type="sequence caution" evidence="2">
    <conflict type="erroneous initiation">
        <sequence resource="EMBL-CDS" id="ABD20531"/>
    </conflict>
</comment>
<gene>
    <name evidence="1" type="primary">mnmG</name>
    <name evidence="1" type="synonym">gidA</name>
    <name type="ordered locus">SAUSA300_2645</name>
</gene>
<proteinExistence type="inferred from homology"/>
<evidence type="ECO:0000255" key="1">
    <source>
        <dbReference type="HAMAP-Rule" id="MF_00129"/>
    </source>
</evidence>
<evidence type="ECO:0000305" key="2"/>
<name>MNMG_STAA3</name>